<sequence>MQNAGLSPTPSLRALGGLAMAALLSTVWLWWRLGAAPGGAPAPQPTTTILVWHWPFASQPPELPGDTCTRYGVARCRLTVNRSLLAGADAVVFHHRELQTQQARLPLAERPRGQPWVWASMESPSHTRGLGRLRGVFNWVLSYRRDSDIFVPYGRLEPREGPAPPLPAKRGLAAWVVSNFQKRQRRVQLYRQLALHLRVDVFGRAAGQPLCASCLLRAVAGYRFYLSFENSEHRDYITEKFWRNALLAGAVPVVLGPPRAAYEAVAPPDAFVHVDDFGSARELAAFLTSMNESCYRRYFAWRDRFRVRLFSDWRERFCAICARFPQLPRGQVYQDLEGWFQA</sequence>
<proteinExistence type="evidence at protein level"/>
<protein>
    <recommendedName>
        <fullName evidence="1">Alpha-(1,3)-fucosyltransferase 7</fullName>
        <shortName evidence="6">bfut7</shortName>
        <ecNumber evidence="5">2.4.1.-</ecNumber>
    </recommendedName>
    <alternativeName>
        <fullName>Fucosyltransferase 7</fullName>
    </alternativeName>
    <alternativeName>
        <fullName evidence="1">Fucosyltransferase VII</fullName>
        <shortName evidence="1">Fuc-TVII</shortName>
        <shortName>FucT-VII</shortName>
    </alternativeName>
    <alternativeName>
        <fullName>Galactoside 3-L-fucosyltransferase</fullName>
    </alternativeName>
    <alternativeName>
        <fullName>Selectin ligand synthase</fullName>
    </alternativeName>
</protein>
<accession>G3MZR2</accession>
<keyword id="KW-1015">Disulfide bond</keyword>
<keyword id="KW-0325">Glycoprotein</keyword>
<keyword id="KW-0328">Glycosyltransferase</keyword>
<keyword id="KW-0472">Membrane</keyword>
<keyword id="KW-1185">Reference proteome</keyword>
<keyword id="KW-0735">Signal-anchor</keyword>
<keyword id="KW-0808">Transferase</keyword>
<keyword id="KW-0812">Transmembrane</keyword>
<keyword id="KW-1133">Transmembrane helix</keyword>
<evidence type="ECO:0000250" key="1">
    <source>
        <dbReference type="UniProtKB" id="Q11130"/>
    </source>
</evidence>
<evidence type="ECO:0000255" key="2"/>
<evidence type="ECO:0000255" key="3">
    <source>
        <dbReference type="PROSITE-ProRule" id="PRU00498"/>
    </source>
</evidence>
<evidence type="ECO:0000255" key="4">
    <source>
        <dbReference type="RuleBase" id="RU003832"/>
    </source>
</evidence>
<evidence type="ECO:0000269" key="5">
    <source>
    </source>
</evidence>
<evidence type="ECO:0000303" key="6">
    <source>
    </source>
</evidence>
<evidence type="ECO:0000305" key="7"/>
<evidence type="ECO:0000305" key="8">
    <source>
    </source>
</evidence>
<name>FUT7_BOVIN</name>
<reference key="1">
    <citation type="journal article" date="2012" name="BMC Genet.">
        <title>Characterization of bovine FUT7 furthers understanding of FUT7 evolution in mammals.</title>
        <authorList>
            <person name="Laporte B."/>
            <person name="Petit D."/>
            <person name="Rocha D."/>
            <person name="Boussaha M."/>
            <person name="Grohs C."/>
            <person name="Maftah A."/>
            <person name="Petit J.M."/>
        </authorList>
    </citation>
    <scope>NUCLEOTIDE SEQUENCE [MRNA]</scope>
    <scope>CATALYTIC ACTIVITY</scope>
    <scope>FUNCTION</scope>
    <scope>TISSUE SPECIFICITY</scope>
</reference>
<reference key="2">
    <citation type="journal article" date="2009" name="Genome Biol.">
        <title>A whole-genome assembly of the domestic cow, Bos taurus.</title>
        <authorList>
            <person name="Zimin A.V."/>
            <person name="Delcher A.L."/>
            <person name="Florea L."/>
            <person name="Kelley D.R."/>
            <person name="Schatz M.C."/>
            <person name="Puiu D."/>
            <person name="Hanrahan F."/>
            <person name="Pertea G."/>
            <person name="Van Tassell C.P."/>
            <person name="Sonstegard T.S."/>
            <person name="Marcais G."/>
            <person name="Roberts M."/>
            <person name="Subramanian P."/>
            <person name="Yorke J.A."/>
            <person name="Salzberg S.L."/>
        </authorList>
    </citation>
    <scope>NUCLEOTIDE SEQUENCE [LARGE SCALE GENOMIC DNA]</scope>
    <source>
        <strain>Hereford</strain>
    </source>
</reference>
<gene>
    <name evidence="1" type="primary">FUT7</name>
</gene>
<dbReference type="EC" id="2.4.1.-" evidence="5"/>
<dbReference type="EMBL" id="DAAA02032436">
    <property type="status" value="NOT_ANNOTATED_CDS"/>
    <property type="molecule type" value="Genomic_DNA"/>
</dbReference>
<dbReference type="SMR" id="G3MZR2"/>
<dbReference type="FunCoup" id="G3MZR2">
    <property type="interactions" value="65"/>
</dbReference>
<dbReference type="STRING" id="9913.ENSBTAP00000055065"/>
<dbReference type="GlyCosmos" id="G3MZR2">
    <property type="glycosylation" value="2 sites, No reported glycans"/>
</dbReference>
<dbReference type="GlyGen" id="G3MZR2">
    <property type="glycosylation" value="2 sites"/>
</dbReference>
<dbReference type="PaxDb" id="9913-ENSBTAP00000055065"/>
<dbReference type="VEuPathDB" id="HostDB:ENSBTAG00000046516"/>
<dbReference type="eggNOG" id="KOG2619">
    <property type="taxonomic scope" value="Eukaryota"/>
</dbReference>
<dbReference type="InParanoid" id="G3MZR2"/>
<dbReference type="OMA" id="CWVVSHY"/>
<dbReference type="TreeFam" id="TF316348"/>
<dbReference type="Reactome" id="R-BTA-9037629">
    <property type="pathway name" value="Lewis blood group biosynthesis"/>
</dbReference>
<dbReference type="UniPathway" id="UPA00378"/>
<dbReference type="Proteomes" id="UP000009136">
    <property type="component" value="Chromosome 11"/>
</dbReference>
<dbReference type="Bgee" id="ENSBTAG00000046516">
    <property type="expression patterns" value="Expressed in neutrophil and 72 other cell types or tissues"/>
</dbReference>
<dbReference type="GO" id="GO:0016020">
    <property type="term" value="C:membrane"/>
    <property type="evidence" value="ECO:0007669"/>
    <property type="project" value="UniProtKB-SubCell"/>
</dbReference>
<dbReference type="GO" id="GO:0017083">
    <property type="term" value="F:4-galactosyl-N-acetylglucosaminide 3-alpha-L-fucosyltransferase activity"/>
    <property type="evidence" value="ECO:0000250"/>
    <property type="project" value="UniProtKB"/>
</dbReference>
<dbReference type="GO" id="GO:0046920">
    <property type="term" value="F:alpha-(1-&gt;3)-fucosyltransferase activity"/>
    <property type="evidence" value="ECO:0000314"/>
    <property type="project" value="UniProtKB"/>
</dbReference>
<dbReference type="GO" id="GO:0036065">
    <property type="term" value="P:fucosylation"/>
    <property type="evidence" value="ECO:0000318"/>
    <property type="project" value="GO_Central"/>
</dbReference>
<dbReference type="GO" id="GO:0006954">
    <property type="term" value="P:inflammatory response"/>
    <property type="evidence" value="ECO:0000250"/>
    <property type="project" value="UniProtKB"/>
</dbReference>
<dbReference type="GO" id="GO:0002523">
    <property type="term" value="P:leukocyte migration involved in inflammatory response"/>
    <property type="evidence" value="ECO:0000250"/>
    <property type="project" value="UniProtKB"/>
</dbReference>
<dbReference type="GO" id="GO:0097022">
    <property type="term" value="P:lymphocyte migration into lymph node"/>
    <property type="evidence" value="ECO:0000250"/>
    <property type="project" value="UniProtKB"/>
</dbReference>
<dbReference type="GO" id="GO:0045785">
    <property type="term" value="P:positive regulation of cell adhesion"/>
    <property type="evidence" value="ECO:0000250"/>
    <property type="project" value="UniProtKB"/>
</dbReference>
<dbReference type="GO" id="GO:0022409">
    <property type="term" value="P:positive regulation of cell-cell adhesion"/>
    <property type="evidence" value="ECO:0000250"/>
    <property type="project" value="UniProtKB"/>
</dbReference>
<dbReference type="GO" id="GO:1904996">
    <property type="term" value="P:positive regulation of leukocyte adhesion to vascular endothelial cell"/>
    <property type="evidence" value="ECO:0000250"/>
    <property type="project" value="UniProtKB"/>
</dbReference>
<dbReference type="GO" id="GO:1903238">
    <property type="term" value="P:positive regulation of leukocyte tethering or rolling"/>
    <property type="evidence" value="ECO:0000250"/>
    <property type="project" value="UniProtKB"/>
</dbReference>
<dbReference type="GO" id="GO:1902624">
    <property type="term" value="P:positive regulation of neutrophil migration"/>
    <property type="evidence" value="ECO:0000250"/>
    <property type="project" value="UniProtKB"/>
</dbReference>
<dbReference type="GO" id="GO:0006486">
    <property type="term" value="P:protein glycosylation"/>
    <property type="evidence" value="ECO:0007669"/>
    <property type="project" value="UniProtKB-UniPathway"/>
</dbReference>
<dbReference type="GO" id="GO:0022407">
    <property type="term" value="P:regulation of cell-cell adhesion"/>
    <property type="evidence" value="ECO:0000250"/>
    <property type="project" value="UniProtKB"/>
</dbReference>
<dbReference type="GO" id="GO:0046626">
    <property type="term" value="P:regulation of insulin receptor signaling pathway"/>
    <property type="evidence" value="ECO:0000250"/>
    <property type="project" value="UniProtKB"/>
</dbReference>
<dbReference type="GO" id="GO:0001807">
    <property type="term" value="P:regulation of type IV hypersensitivity"/>
    <property type="evidence" value="ECO:0000250"/>
    <property type="project" value="UniProtKB"/>
</dbReference>
<dbReference type="FunFam" id="3.40.50.11660:FF:000001">
    <property type="entry name" value="alpha-(1,3)-fucosyltransferase 9"/>
    <property type="match status" value="1"/>
</dbReference>
<dbReference type="Gene3D" id="3.40.50.11660">
    <property type="entry name" value="Glycosyl transferase family 10, C-terminal domain"/>
    <property type="match status" value="1"/>
</dbReference>
<dbReference type="InterPro" id="IPR055270">
    <property type="entry name" value="Glyco_tran_10_C"/>
</dbReference>
<dbReference type="InterPro" id="IPR031481">
    <property type="entry name" value="Glyco_tran_10_N"/>
</dbReference>
<dbReference type="InterPro" id="IPR001503">
    <property type="entry name" value="Glyco_trans_10"/>
</dbReference>
<dbReference type="InterPro" id="IPR038577">
    <property type="entry name" value="GT10-like_C_sf"/>
</dbReference>
<dbReference type="PANTHER" id="PTHR11929">
    <property type="entry name" value="ALPHA- 1,3 -FUCOSYLTRANSFERASE"/>
    <property type="match status" value="1"/>
</dbReference>
<dbReference type="PANTHER" id="PTHR11929:SF12">
    <property type="entry name" value="ALPHA-(1,3)-FUCOSYLTRANSFERASE 7"/>
    <property type="match status" value="1"/>
</dbReference>
<dbReference type="Pfam" id="PF17039">
    <property type="entry name" value="Glyco_tran_10_N"/>
    <property type="match status" value="1"/>
</dbReference>
<dbReference type="Pfam" id="PF00852">
    <property type="entry name" value="Glyco_transf_10"/>
    <property type="match status" value="1"/>
</dbReference>
<dbReference type="SUPFAM" id="SSF53756">
    <property type="entry name" value="UDP-Glycosyltransferase/glycogen phosphorylase"/>
    <property type="match status" value="1"/>
</dbReference>
<organism>
    <name type="scientific">Bos taurus</name>
    <name type="common">Bovine</name>
    <dbReference type="NCBI Taxonomy" id="9913"/>
    <lineage>
        <taxon>Eukaryota</taxon>
        <taxon>Metazoa</taxon>
        <taxon>Chordata</taxon>
        <taxon>Craniata</taxon>
        <taxon>Vertebrata</taxon>
        <taxon>Euteleostomi</taxon>
        <taxon>Mammalia</taxon>
        <taxon>Eutheria</taxon>
        <taxon>Laurasiatheria</taxon>
        <taxon>Artiodactyla</taxon>
        <taxon>Ruminantia</taxon>
        <taxon>Pecora</taxon>
        <taxon>Bovidae</taxon>
        <taxon>Bovinae</taxon>
        <taxon>Bos</taxon>
    </lineage>
</organism>
<feature type="chain" id="PRO_0000449122" description="Alpha-(1,3)-fucosyltransferase 7">
    <location>
        <begin position="1"/>
        <end position="342"/>
    </location>
</feature>
<feature type="topological domain" description="Cytoplasmic" evidence="7">
    <location>
        <begin position="1"/>
        <end position="11"/>
    </location>
</feature>
<feature type="transmembrane region" description="Helical; Signal-anchor for type II membrane protein" evidence="2">
    <location>
        <begin position="12"/>
        <end position="31"/>
    </location>
</feature>
<feature type="topological domain" description="Extracellular" evidence="7">
    <location>
        <begin position="32"/>
        <end position="342"/>
    </location>
</feature>
<feature type="glycosylation site" description="N-linked (GlcNAc...) asparagine" evidence="3">
    <location>
        <position position="81"/>
    </location>
</feature>
<feature type="glycosylation site" description="N-linked (GlcNAc...) asparagine" evidence="3">
    <location>
        <position position="291"/>
    </location>
</feature>
<feature type="disulfide bond" evidence="1">
    <location>
        <begin position="68"/>
        <end position="76"/>
    </location>
</feature>
<feature type="disulfide bond" evidence="1">
    <location>
        <begin position="211"/>
        <end position="214"/>
    </location>
</feature>
<feature type="disulfide bond" evidence="1">
    <location>
        <begin position="318"/>
        <end position="321"/>
    </location>
</feature>
<comment type="function">
    <text evidence="1 5">Catalyzes the transfer of L-fucose, from a guanosine diphosphate-beta-L-fucose, to the N-acetyl glucosamine (GlcNAc) of a distal alpha2,3 sialylated lactosamine unit of a glycoprotein or a glycolipid-linked sialopolylactosamines chain through an alpha-1,3 glycosidic linkage and participates in the final fucosylation step in the biosynthesis of the sialyl Lewis X (sLe(x)), a carbohydrate involved in cell and matrix adhesion during leukocyte trafficking and fertilization (PubMed:22909383). In vitro, also synthesizes sialyl-dimeric-Lex structures, from VIM-2 structures and both di-fucosylated and trifucosylated structures from mono-fucosylated precursors. However does not catalyze alpha 1-3 fucosylation when an internal alpha 1-3 fucosylation is present in polylactosamine chain and the fucosylation rate of the internal GlcNAc residues is reduced once fucose has been added to the distal GlcNAc. Also catalyzes the transfer of a fucose from GDP-beta-fucose to the 6-sulfated a(2,3)sialylated substrate to produce 6-sulfo sLex mediating significant L-selectin-dependent cell adhesion. Through sialyl-Lewis(x) biosynthesis, can control SELE- and SELP-mediated cell adhesion with leukocytes and allows leukocytes tethering and rolling along the endothelial tissue thereby enabling the leukocytes to accumulate at a site of inflammation. May enhance embryo implantation through sialyl Lewis X (sLeX)-mediated adhesion of embryo cells to endometrium. May affect insulin signaling by up-regulating the phosphorylation and expression of some signaling molecules involved in the insulin-signaling pathway through SLe(x) which is present on the glycans of the INSRR alpha subunit (By similarity).</text>
</comment>
<comment type="catalytic activity">
    <reaction evidence="5">
        <text>an N-acetyl-alpha-neuraminyl-(2-&gt;3)-beta-D-galactosyl-(1-&gt;4)-N-acetyl-beta-D-glucosaminyl derivative + GDP-beta-L-fucose = an alpha-Neu5Ac-(2-&gt;3)-beta-D-Gal-(1-&gt;4)-[alpha-L-Fuc-(1-&gt;3)]-beta-D-GlcNAc derivative + GDP + H(+)</text>
        <dbReference type="Rhea" id="RHEA:56076"/>
        <dbReference type="ChEBI" id="CHEBI:15378"/>
        <dbReference type="ChEBI" id="CHEBI:57273"/>
        <dbReference type="ChEBI" id="CHEBI:58189"/>
        <dbReference type="ChEBI" id="CHEBI:136545"/>
        <dbReference type="ChEBI" id="CHEBI:139509"/>
    </reaction>
    <physiologicalReaction direction="left-to-right" evidence="8">
        <dbReference type="Rhea" id="RHEA:56077"/>
    </physiologicalReaction>
</comment>
<comment type="catalytic activity">
    <reaction evidence="1">
        <text>a neolactoside IV(3)-alpha-NeuAc-nLc4Cer + GDP-beta-L-fucose = a neolactoside IV(3)-alpha-NeuNAc,III(3)-alpha-Fuc-nLc4Cer + GDP + H(+)</text>
        <dbReference type="Rhea" id="RHEA:48392"/>
        <dbReference type="ChEBI" id="CHEBI:15378"/>
        <dbReference type="ChEBI" id="CHEBI:57273"/>
        <dbReference type="ChEBI" id="CHEBI:58189"/>
        <dbReference type="ChEBI" id="CHEBI:90390"/>
        <dbReference type="ChEBI" id="CHEBI:90392"/>
    </reaction>
    <physiologicalReaction direction="left-to-right" evidence="1">
        <dbReference type="Rhea" id="RHEA:48393"/>
    </physiologicalReaction>
</comment>
<comment type="catalytic activity">
    <reaction evidence="1">
        <text>a neolactoside VI(3)-alpha-NeuNAc-nLc6Cer + GDP-beta-L-fucose = a neolactoside VI(3)-alpha-NeuAc,V(3)-alphaFuc-nLc6Cer + GDP + H(+)</text>
        <dbReference type="Rhea" id="RHEA:48356"/>
        <dbReference type="ChEBI" id="CHEBI:15378"/>
        <dbReference type="ChEBI" id="CHEBI:57273"/>
        <dbReference type="ChEBI" id="CHEBI:58189"/>
        <dbReference type="ChEBI" id="CHEBI:90336"/>
        <dbReference type="ChEBI" id="CHEBI:90339"/>
    </reaction>
    <physiologicalReaction direction="left-to-right" evidence="1">
        <dbReference type="Rhea" id="RHEA:48357"/>
    </physiologicalReaction>
</comment>
<comment type="catalytic activity">
    <reaction evidence="1">
        <text>an alpha-Neu5Ac-(2-&gt;3)-beta-D-Gal-(1-&gt;4)-beta-D-GlcNAc-(1-&gt;3)-beta-D-Gal-(1-&gt;4)-[alpha-L-Fuc-(1-&gt;3)]-beta-D-GlcNAc derivative + GDP-beta-L-fucose = an alpha-Neu5Ac-(2-&gt;3)-beta-D-Gal-(1-&gt;4)-[alpha-L-Fuc-(1-&gt;3)]-beta-D-GlcNAc-(1-&gt;3)-beta-D-Gal-(1-&gt;4)-[alpha-L-Fuc-(1-&gt;3)]-beta-D-GlcNAc derivative + GDP + H(+)</text>
        <dbReference type="Rhea" id="RHEA:52864"/>
        <dbReference type="ChEBI" id="CHEBI:15378"/>
        <dbReference type="ChEBI" id="CHEBI:57273"/>
        <dbReference type="ChEBI" id="CHEBI:58189"/>
        <dbReference type="ChEBI" id="CHEBI:145342"/>
        <dbReference type="ChEBI" id="CHEBI:145343"/>
    </reaction>
    <physiologicalReaction direction="left-to-right" evidence="1">
        <dbReference type="Rhea" id="RHEA:52865"/>
    </physiologicalReaction>
</comment>
<comment type="catalytic activity">
    <reaction evidence="1">
        <text>an alpha-Neu5Ac-(2-&gt;3)-beta-D-Gal-(1-&gt;4)-beta-D-GlcNAc6S derivative + GDP-beta-L-fucose = an alpha-Neu5Ac-(2-&gt;3)-beta-D-Gal-(1-&gt;4)-[alpha-L-Fuc-(1-&gt;3)]-beta-D-GlcNAc6S derivative + GDP + H(+)</text>
        <dbReference type="Rhea" id="RHEA:62004"/>
        <dbReference type="ChEBI" id="CHEBI:15378"/>
        <dbReference type="ChEBI" id="CHEBI:57273"/>
        <dbReference type="ChEBI" id="CHEBI:58189"/>
        <dbReference type="ChEBI" id="CHEBI:145344"/>
        <dbReference type="ChEBI" id="CHEBI:145345"/>
    </reaction>
    <physiologicalReaction direction="left-to-right" evidence="1">
        <dbReference type="Rhea" id="RHEA:62005"/>
    </physiologicalReaction>
</comment>
<comment type="catalytic activity">
    <reaction evidence="1">
        <text>alpha-Neu5Ac-(2-&gt;3)-beta-D-Gal-(1-&gt;4)-beta-D-GlcNAc-(1-&gt;3)-beta-D-Gal-(1-&gt;4)-D-Glc + GDP-beta-L-fucose = alpha-Neu5Ac-(2-&gt;3)-beta-D-Gal-(1-&gt;4)-[alpha-L-Fuc-(1-&gt;3)]-beta-D-GlcNAc-(1-&gt;3)-beta-D-Gal-(1-&gt;4)-D-Glc + GDP + H(+)</text>
        <dbReference type="Rhea" id="RHEA:62008"/>
        <dbReference type="ChEBI" id="CHEBI:15378"/>
        <dbReference type="ChEBI" id="CHEBI:57273"/>
        <dbReference type="ChEBI" id="CHEBI:58189"/>
        <dbReference type="ChEBI" id="CHEBI:145346"/>
        <dbReference type="ChEBI" id="CHEBI:145347"/>
    </reaction>
    <physiologicalReaction direction="left-to-right" evidence="1">
        <dbReference type="Rhea" id="RHEA:62009"/>
    </physiologicalReaction>
</comment>
<comment type="catalytic activity">
    <reaction evidence="1">
        <text>alpha-Neu5Ac-(2-&gt;3)-beta-D-Gal-(1-&gt;4)-beta-D-GlcNAc-(1-&gt;3)-beta-D-Gal-(1-&gt;4)-[alpha-L-Fuc-(1-&gt;3)]-beta-D-GlcNAc-(1-&gt;3)-beta-D-Gal-(1-&gt;4)-beta-D-GlcNAc + GDP-beta-L-fucose = alpha-Neu5Ac-(2-&gt;3)-beta-D-Gal-(1-&gt;4)-[alpha-L-Fuc-(1-&gt;3)]-beta-D-GlcNAc-(1-&gt;3)-beta-D-Gal-(1-&gt;4)-[alpha-L-Fuc-(1-&gt;3)]-beta-D-GlcNAc-(1-&gt;3)-beta-D-Gal-(1-&gt;4)-beta-D-GlcNAc + GDP + H(+)</text>
        <dbReference type="Rhea" id="RHEA:62060"/>
        <dbReference type="ChEBI" id="CHEBI:15378"/>
        <dbReference type="ChEBI" id="CHEBI:57273"/>
        <dbReference type="ChEBI" id="CHEBI:58189"/>
        <dbReference type="ChEBI" id="CHEBI:145400"/>
        <dbReference type="ChEBI" id="CHEBI:145401"/>
    </reaction>
    <physiologicalReaction direction="left-to-right" evidence="1">
        <dbReference type="Rhea" id="RHEA:62061"/>
    </physiologicalReaction>
</comment>
<comment type="catalytic activity">
    <reaction evidence="1">
        <text>alpha-Neu5Ac-(2-&gt;3)-beta-D-Gal-(1-&gt;4)-beta-D-GlcNAc-(1-&gt;3)-beta-D-Gal-(1-&gt;4)-beta-D-GlcNAc-(1-&gt;3)-beta-D-Gal-(1-&gt;4)-beta-D-GlcNAc + GDP-beta-L-fucose = alpha-Neu5Ac-(2-&gt;3)-beta-D-Gal-(1-&gt;4)-[alpha-L-Fuc-(1-&gt;3)]-beta-D-GlcNAc-(1-&gt;3)-beta-D-Gal-(1-&gt;4)-beta-D-GlcNAc-(1-&gt;3)-beta-D-Gal-(1-&gt;4)-beta-D-GlcNAc + GDP + H(+)</text>
        <dbReference type="Rhea" id="RHEA:62056"/>
        <dbReference type="ChEBI" id="CHEBI:15378"/>
        <dbReference type="ChEBI" id="CHEBI:57273"/>
        <dbReference type="ChEBI" id="CHEBI:58189"/>
        <dbReference type="ChEBI" id="CHEBI:145398"/>
        <dbReference type="ChEBI" id="CHEBI:145399"/>
    </reaction>
    <physiologicalReaction direction="left-to-right" evidence="1">
        <dbReference type="Rhea" id="RHEA:62057"/>
    </physiologicalReaction>
</comment>
<comment type="activity regulation">
    <text evidence="1">Inhibited by NaCl. Inhibited by GDP in a concentration dependent manner, with an IC(50) value of 93 uM. Also inhibited by GMP and GTP. Inhibited by N-ethylmaleimide. Activated by poly(ethylene glycol) by enhancing the thermal stability of FUT7. Activated by Mn2+, Ca2+, and Mg2+. Both panosialin A and B inhibit activity with IC(50) values of 4.8 and 5.3 ug/ml, respectively. Inhibited by gallic acid (GA) and (-)-epigallocatechin gallate (EGCG) in a time-dependent and irreversible manner with IC(50) values of 60 and 700 nM, respectively.</text>
</comment>
<comment type="pathway">
    <text evidence="1">Protein modification; protein glycosylation.</text>
</comment>
<comment type="subcellular location">
    <subcellularLocation>
        <location evidence="2">Membrane</location>
        <topology evidence="2">Single-pass membrane protein</topology>
    </subcellularLocation>
</comment>
<comment type="tissue specificity">
    <text evidence="5">Expressed in thymus, spleen, liver and lung. Highly expressed in the thymus and lower expressed in the lung.</text>
</comment>
<comment type="PTM">
    <text evidence="1">N-glycosylated.</text>
</comment>
<comment type="similarity">
    <text evidence="2 4">Belongs to the glycosyltransferase 10 family.</text>
</comment>